<evidence type="ECO:0000255" key="1">
    <source>
        <dbReference type="HAMAP-Rule" id="MF_01646"/>
    </source>
</evidence>
<dbReference type="EC" id="2.1.1.107" evidence="1"/>
<dbReference type="EC" id="1.3.1.76" evidence="1"/>
<dbReference type="EC" id="4.99.1.4" evidence="1"/>
<dbReference type="EMBL" id="AE014613">
    <property type="protein sequence ID" value="AAO71497.1"/>
    <property type="molecule type" value="Genomic_DNA"/>
</dbReference>
<dbReference type="EMBL" id="AL513382">
    <property type="protein sequence ID" value="CAD08136.1"/>
    <property type="molecule type" value="Genomic_DNA"/>
</dbReference>
<dbReference type="RefSeq" id="NP_458425.1">
    <property type="nucleotide sequence ID" value="NC_003198.1"/>
</dbReference>
<dbReference type="RefSeq" id="WP_000349908.1">
    <property type="nucleotide sequence ID" value="NZ_WSUR01000001.1"/>
</dbReference>
<dbReference type="SMR" id="Q8Z201"/>
<dbReference type="STRING" id="220341.gene:17588149"/>
<dbReference type="KEGG" id="stt:t4028"/>
<dbReference type="KEGG" id="sty:STY4319"/>
<dbReference type="PATRIC" id="fig|220341.7.peg.4414"/>
<dbReference type="eggNOG" id="COG0007">
    <property type="taxonomic scope" value="Bacteria"/>
</dbReference>
<dbReference type="eggNOG" id="COG1648">
    <property type="taxonomic scope" value="Bacteria"/>
</dbReference>
<dbReference type="HOGENOM" id="CLU_011276_2_0_6"/>
<dbReference type="OMA" id="IPYGRFM"/>
<dbReference type="OrthoDB" id="9815856at2"/>
<dbReference type="UniPathway" id="UPA00148">
    <property type="reaction ID" value="UER00211"/>
</dbReference>
<dbReference type="UniPathway" id="UPA00148">
    <property type="reaction ID" value="UER00222"/>
</dbReference>
<dbReference type="UniPathway" id="UPA00262">
    <property type="reaction ID" value="UER00211"/>
</dbReference>
<dbReference type="UniPathway" id="UPA00262">
    <property type="reaction ID" value="UER00222"/>
</dbReference>
<dbReference type="UniPathway" id="UPA00262">
    <property type="reaction ID" value="UER00376"/>
</dbReference>
<dbReference type="Proteomes" id="UP000000541">
    <property type="component" value="Chromosome"/>
</dbReference>
<dbReference type="Proteomes" id="UP000002670">
    <property type="component" value="Chromosome"/>
</dbReference>
<dbReference type="GO" id="GO:0051287">
    <property type="term" value="F:NAD binding"/>
    <property type="evidence" value="ECO:0007669"/>
    <property type="project" value="InterPro"/>
</dbReference>
<dbReference type="GO" id="GO:0043115">
    <property type="term" value="F:precorrin-2 dehydrogenase activity"/>
    <property type="evidence" value="ECO:0007669"/>
    <property type="project" value="UniProtKB-UniRule"/>
</dbReference>
<dbReference type="GO" id="GO:0051266">
    <property type="term" value="F:sirohydrochlorin ferrochelatase activity"/>
    <property type="evidence" value="ECO:0007669"/>
    <property type="project" value="UniProtKB-EC"/>
</dbReference>
<dbReference type="GO" id="GO:0004851">
    <property type="term" value="F:uroporphyrin-III C-methyltransferase activity"/>
    <property type="evidence" value="ECO:0007669"/>
    <property type="project" value="UniProtKB-UniRule"/>
</dbReference>
<dbReference type="GO" id="GO:0009236">
    <property type="term" value="P:cobalamin biosynthetic process"/>
    <property type="evidence" value="ECO:0007669"/>
    <property type="project" value="UniProtKB-UniRule"/>
</dbReference>
<dbReference type="GO" id="GO:0032259">
    <property type="term" value="P:methylation"/>
    <property type="evidence" value="ECO:0007669"/>
    <property type="project" value="UniProtKB-KW"/>
</dbReference>
<dbReference type="GO" id="GO:0019354">
    <property type="term" value="P:siroheme biosynthetic process"/>
    <property type="evidence" value="ECO:0007669"/>
    <property type="project" value="UniProtKB-UniRule"/>
</dbReference>
<dbReference type="CDD" id="cd11642">
    <property type="entry name" value="SUMT"/>
    <property type="match status" value="1"/>
</dbReference>
<dbReference type="FunFam" id="1.10.8.210:FF:000001">
    <property type="entry name" value="Siroheme synthase"/>
    <property type="match status" value="1"/>
</dbReference>
<dbReference type="FunFam" id="3.30.160.110:FF:000001">
    <property type="entry name" value="Siroheme synthase"/>
    <property type="match status" value="1"/>
</dbReference>
<dbReference type="FunFam" id="3.30.950.10:FF:000001">
    <property type="entry name" value="Siroheme synthase"/>
    <property type="match status" value="1"/>
</dbReference>
<dbReference type="FunFam" id="3.40.1010.10:FF:000001">
    <property type="entry name" value="Siroheme synthase"/>
    <property type="match status" value="1"/>
</dbReference>
<dbReference type="FunFam" id="3.40.50.720:FF:000092">
    <property type="entry name" value="Siroheme synthase"/>
    <property type="match status" value="1"/>
</dbReference>
<dbReference type="Gene3D" id="3.40.1010.10">
    <property type="entry name" value="Cobalt-precorrin-4 Transmethylase, Domain 1"/>
    <property type="match status" value="1"/>
</dbReference>
<dbReference type="Gene3D" id="3.30.950.10">
    <property type="entry name" value="Methyltransferase, Cobalt-precorrin-4 Transmethylase, Domain 2"/>
    <property type="match status" value="1"/>
</dbReference>
<dbReference type="Gene3D" id="3.40.50.720">
    <property type="entry name" value="NAD(P)-binding Rossmann-like Domain"/>
    <property type="match status" value="1"/>
</dbReference>
<dbReference type="Gene3D" id="1.10.8.210">
    <property type="entry name" value="Sirohaem synthase, dimerisation domain"/>
    <property type="match status" value="1"/>
</dbReference>
<dbReference type="Gene3D" id="3.30.160.110">
    <property type="entry name" value="Siroheme synthase, domain 2"/>
    <property type="match status" value="1"/>
</dbReference>
<dbReference type="HAMAP" id="MF_01646">
    <property type="entry name" value="Siroheme_synth"/>
    <property type="match status" value="1"/>
</dbReference>
<dbReference type="InterPro" id="IPR000878">
    <property type="entry name" value="4pyrrol_Mease"/>
</dbReference>
<dbReference type="InterPro" id="IPR035996">
    <property type="entry name" value="4pyrrol_Methylase_sf"/>
</dbReference>
<dbReference type="InterPro" id="IPR014777">
    <property type="entry name" value="4pyrrole_Mease_sub1"/>
</dbReference>
<dbReference type="InterPro" id="IPR014776">
    <property type="entry name" value="4pyrrole_Mease_sub2"/>
</dbReference>
<dbReference type="InterPro" id="IPR006366">
    <property type="entry name" value="CobA/CysG_C"/>
</dbReference>
<dbReference type="InterPro" id="IPR036291">
    <property type="entry name" value="NAD(P)-bd_dom_sf"/>
</dbReference>
<dbReference type="InterPro" id="IPR050161">
    <property type="entry name" value="Siro_Cobalamin_biosynth"/>
</dbReference>
<dbReference type="InterPro" id="IPR037115">
    <property type="entry name" value="Sirohaem_synt_dimer_dom_sf"/>
</dbReference>
<dbReference type="InterPro" id="IPR012409">
    <property type="entry name" value="Sirohaem_synth"/>
</dbReference>
<dbReference type="InterPro" id="IPR028281">
    <property type="entry name" value="Sirohaem_synthase_central"/>
</dbReference>
<dbReference type="InterPro" id="IPR019478">
    <property type="entry name" value="Sirohaem_synthase_dimer_dom"/>
</dbReference>
<dbReference type="InterPro" id="IPR006367">
    <property type="entry name" value="Sirohaem_synthase_N"/>
</dbReference>
<dbReference type="InterPro" id="IPR003043">
    <property type="entry name" value="Uropor_MeTrfase_CS"/>
</dbReference>
<dbReference type="NCBIfam" id="TIGR01469">
    <property type="entry name" value="cobA_cysG_Cterm"/>
    <property type="match status" value="1"/>
</dbReference>
<dbReference type="NCBIfam" id="TIGR01470">
    <property type="entry name" value="cysG_Nterm"/>
    <property type="match status" value="1"/>
</dbReference>
<dbReference type="NCBIfam" id="NF004790">
    <property type="entry name" value="PRK06136.1"/>
    <property type="match status" value="1"/>
</dbReference>
<dbReference type="NCBIfam" id="NF007922">
    <property type="entry name" value="PRK10637.1"/>
    <property type="match status" value="1"/>
</dbReference>
<dbReference type="PANTHER" id="PTHR45790:SF1">
    <property type="entry name" value="SIROHEME SYNTHASE"/>
    <property type="match status" value="1"/>
</dbReference>
<dbReference type="PANTHER" id="PTHR45790">
    <property type="entry name" value="SIROHEME SYNTHASE-RELATED"/>
    <property type="match status" value="1"/>
</dbReference>
<dbReference type="Pfam" id="PF10414">
    <property type="entry name" value="CysG_dimeriser"/>
    <property type="match status" value="1"/>
</dbReference>
<dbReference type="Pfam" id="PF13241">
    <property type="entry name" value="NAD_binding_7"/>
    <property type="match status" value="1"/>
</dbReference>
<dbReference type="Pfam" id="PF14824">
    <property type="entry name" value="Sirohm_synth_M"/>
    <property type="match status" value="1"/>
</dbReference>
<dbReference type="Pfam" id="PF00590">
    <property type="entry name" value="TP_methylase"/>
    <property type="match status" value="1"/>
</dbReference>
<dbReference type="PIRSF" id="PIRSF036426">
    <property type="entry name" value="Sirohaem_synth"/>
    <property type="match status" value="1"/>
</dbReference>
<dbReference type="SUPFAM" id="SSF51735">
    <property type="entry name" value="NAD(P)-binding Rossmann-fold domains"/>
    <property type="match status" value="1"/>
</dbReference>
<dbReference type="SUPFAM" id="SSF75615">
    <property type="entry name" value="Siroheme synthase middle domains-like"/>
    <property type="match status" value="1"/>
</dbReference>
<dbReference type="SUPFAM" id="SSF53790">
    <property type="entry name" value="Tetrapyrrole methylase"/>
    <property type="match status" value="1"/>
</dbReference>
<dbReference type="PROSITE" id="PS00839">
    <property type="entry name" value="SUMT_1"/>
    <property type="match status" value="1"/>
</dbReference>
<dbReference type="PROSITE" id="PS00840">
    <property type="entry name" value="SUMT_2"/>
    <property type="match status" value="1"/>
</dbReference>
<protein>
    <recommendedName>
        <fullName evidence="1">Siroheme synthase</fullName>
    </recommendedName>
    <domain>
        <recommendedName>
            <fullName evidence="1">Uroporphyrinogen-III C-methyltransferase</fullName>
            <shortName evidence="1">Urogen III methylase</shortName>
            <ecNumber evidence="1">2.1.1.107</ecNumber>
        </recommendedName>
        <alternativeName>
            <fullName evidence="1">SUMT</fullName>
        </alternativeName>
        <alternativeName>
            <fullName evidence="1">Uroporphyrinogen III methylase</fullName>
            <shortName evidence="1">UROM</shortName>
        </alternativeName>
    </domain>
    <domain>
        <recommendedName>
            <fullName evidence="1">Precorrin-2 dehydrogenase</fullName>
            <ecNumber evidence="1">1.3.1.76</ecNumber>
        </recommendedName>
    </domain>
    <domain>
        <recommendedName>
            <fullName evidence="1">Sirohydrochlorin ferrochelatase</fullName>
            <ecNumber evidence="1">4.99.1.4</ecNumber>
        </recommendedName>
    </domain>
</protein>
<organism>
    <name type="scientific">Salmonella typhi</name>
    <dbReference type="NCBI Taxonomy" id="90370"/>
    <lineage>
        <taxon>Bacteria</taxon>
        <taxon>Pseudomonadati</taxon>
        <taxon>Pseudomonadota</taxon>
        <taxon>Gammaproteobacteria</taxon>
        <taxon>Enterobacterales</taxon>
        <taxon>Enterobacteriaceae</taxon>
        <taxon>Salmonella</taxon>
    </lineage>
</organism>
<name>CYSG_SALTI</name>
<reference key="1">
    <citation type="journal article" date="2001" name="Nature">
        <title>Complete genome sequence of a multiple drug resistant Salmonella enterica serovar Typhi CT18.</title>
        <authorList>
            <person name="Parkhill J."/>
            <person name="Dougan G."/>
            <person name="James K.D."/>
            <person name="Thomson N.R."/>
            <person name="Pickard D."/>
            <person name="Wain J."/>
            <person name="Churcher C.M."/>
            <person name="Mungall K.L."/>
            <person name="Bentley S.D."/>
            <person name="Holden M.T.G."/>
            <person name="Sebaihia M."/>
            <person name="Baker S."/>
            <person name="Basham D."/>
            <person name="Brooks K."/>
            <person name="Chillingworth T."/>
            <person name="Connerton P."/>
            <person name="Cronin A."/>
            <person name="Davis P."/>
            <person name="Davies R.M."/>
            <person name="Dowd L."/>
            <person name="White N."/>
            <person name="Farrar J."/>
            <person name="Feltwell T."/>
            <person name="Hamlin N."/>
            <person name="Haque A."/>
            <person name="Hien T.T."/>
            <person name="Holroyd S."/>
            <person name="Jagels K."/>
            <person name="Krogh A."/>
            <person name="Larsen T.S."/>
            <person name="Leather S."/>
            <person name="Moule S."/>
            <person name="O'Gaora P."/>
            <person name="Parry C."/>
            <person name="Quail M.A."/>
            <person name="Rutherford K.M."/>
            <person name="Simmonds M."/>
            <person name="Skelton J."/>
            <person name="Stevens K."/>
            <person name="Whitehead S."/>
            <person name="Barrell B.G."/>
        </authorList>
    </citation>
    <scope>NUCLEOTIDE SEQUENCE [LARGE SCALE GENOMIC DNA]</scope>
    <source>
        <strain>CT18</strain>
    </source>
</reference>
<reference key="2">
    <citation type="journal article" date="2003" name="J. Bacteriol.">
        <title>Comparative genomics of Salmonella enterica serovar Typhi strains Ty2 and CT18.</title>
        <authorList>
            <person name="Deng W."/>
            <person name="Liou S.-R."/>
            <person name="Plunkett G. III"/>
            <person name="Mayhew G.F."/>
            <person name="Rose D.J."/>
            <person name="Burland V."/>
            <person name="Kodoyianni V."/>
            <person name="Schwartz D.C."/>
            <person name="Blattner F.R."/>
        </authorList>
    </citation>
    <scope>NUCLEOTIDE SEQUENCE [LARGE SCALE GENOMIC DNA]</scope>
    <source>
        <strain>ATCC 700931 / Ty2</strain>
    </source>
</reference>
<proteinExistence type="inferred from homology"/>
<accession>Q8Z201</accession>
<accession>Q7C5U6</accession>
<keyword id="KW-0169">Cobalamin biosynthesis</keyword>
<keyword id="KW-0456">Lyase</keyword>
<keyword id="KW-0489">Methyltransferase</keyword>
<keyword id="KW-0511">Multifunctional enzyme</keyword>
<keyword id="KW-0520">NAD</keyword>
<keyword id="KW-0560">Oxidoreductase</keyword>
<keyword id="KW-0597">Phosphoprotein</keyword>
<keyword id="KW-0627">Porphyrin biosynthesis</keyword>
<keyword id="KW-0949">S-adenosyl-L-methionine</keyword>
<keyword id="KW-0808">Transferase</keyword>
<comment type="function">
    <text evidence="1">Multifunctional enzyme that catalyzes the SAM-dependent methylations of uroporphyrinogen III at position C-2 and C-7 to form precorrin-2 via precorrin-1. Then it catalyzes the NAD-dependent ring dehydrogenation of precorrin-2 to yield sirohydrochlorin. Finally, it catalyzes the ferrochelation of sirohydrochlorin to yield siroheme.</text>
</comment>
<comment type="catalytic activity">
    <reaction evidence="1">
        <text>uroporphyrinogen III + 2 S-adenosyl-L-methionine = precorrin-2 + 2 S-adenosyl-L-homocysteine + H(+)</text>
        <dbReference type="Rhea" id="RHEA:32459"/>
        <dbReference type="ChEBI" id="CHEBI:15378"/>
        <dbReference type="ChEBI" id="CHEBI:57308"/>
        <dbReference type="ChEBI" id="CHEBI:57856"/>
        <dbReference type="ChEBI" id="CHEBI:58827"/>
        <dbReference type="ChEBI" id="CHEBI:59789"/>
        <dbReference type="EC" id="2.1.1.107"/>
    </reaction>
</comment>
<comment type="catalytic activity">
    <reaction evidence="1">
        <text>precorrin-2 + NAD(+) = sirohydrochlorin + NADH + 2 H(+)</text>
        <dbReference type="Rhea" id="RHEA:15613"/>
        <dbReference type="ChEBI" id="CHEBI:15378"/>
        <dbReference type="ChEBI" id="CHEBI:57540"/>
        <dbReference type="ChEBI" id="CHEBI:57945"/>
        <dbReference type="ChEBI" id="CHEBI:58351"/>
        <dbReference type="ChEBI" id="CHEBI:58827"/>
        <dbReference type="EC" id="1.3.1.76"/>
    </reaction>
</comment>
<comment type="catalytic activity">
    <reaction evidence="1">
        <text>siroheme + 2 H(+) = sirohydrochlorin + Fe(2+)</text>
        <dbReference type="Rhea" id="RHEA:24360"/>
        <dbReference type="ChEBI" id="CHEBI:15378"/>
        <dbReference type="ChEBI" id="CHEBI:29033"/>
        <dbReference type="ChEBI" id="CHEBI:58351"/>
        <dbReference type="ChEBI" id="CHEBI:60052"/>
        <dbReference type="EC" id="4.99.1.4"/>
    </reaction>
</comment>
<comment type="pathway">
    <text evidence="1">Cofactor biosynthesis; adenosylcobalamin biosynthesis; precorrin-2 from uroporphyrinogen III: step 1/1.</text>
</comment>
<comment type="pathway">
    <text evidence="1">Cofactor biosynthesis; adenosylcobalamin biosynthesis; sirohydrochlorin from precorrin-2: step 1/1.</text>
</comment>
<comment type="pathway">
    <text evidence="1">Porphyrin-containing compound metabolism; siroheme biosynthesis; precorrin-2 from uroporphyrinogen III: step 1/1.</text>
</comment>
<comment type="pathway">
    <text evidence="1">Porphyrin-containing compound metabolism; siroheme biosynthesis; siroheme from sirohydrochlorin: step 1/1.</text>
</comment>
<comment type="pathway">
    <text evidence="1">Porphyrin-containing compound metabolism; siroheme biosynthesis; sirohydrochlorin from precorrin-2: step 1/1.</text>
</comment>
<comment type="similarity">
    <text evidence="1">In the N-terminal section; belongs to the precorrin-2 dehydrogenase / sirohydrochlorin ferrochelatase family.</text>
</comment>
<comment type="similarity">
    <text evidence="1">In the C-terminal section; belongs to the precorrin methyltransferase family.</text>
</comment>
<sequence>MDHLPIFCQLRDRDCLIVGGGDVAERKARLLLEAGARLTVNALTFIPQFTVWVNEGMLTLVEGPFDETLLDSCWLAIAATDDDTVNQRVSEAAESRRIFCNVVDAPKAASFIMPSIIDRSPLMVAVSSGGTSPVLARLLREKLESLLPQHLGQVARYAGQLRARVKKQFATMGERRRFWEKFFVNDRLAQSLANADEKAVNATTEHLFSEPLDHRGEVVLVGAGPGDAGLLTLKGLQQIQQADIVVYDRLVSDDIMNLVRRDADRVFVGKRAGYHCVPQEEINQILLREAQKGKRVVRLKGGDPFIFGRGGEELETLCHAGIPFSVVPGITAASGCSAYSGIPLTHRDYAQSVRLVTGHLKTGGELDWENLAAEKQTLVFYMGLNQAATIQEKLIAFGMEANMPVALVENGTSVKQRVVHGVLTQLGELAQQVESPALIIVGRVVALRDKLNWFSNH</sequence>
<feature type="chain" id="PRO_0000330556" description="Siroheme synthase">
    <location>
        <begin position="1"/>
        <end position="457"/>
    </location>
</feature>
<feature type="region of interest" description="Precorrin-2 dehydrogenase /sirohydrochlorin ferrochelatase" evidence="1">
    <location>
        <begin position="1"/>
        <end position="204"/>
    </location>
</feature>
<feature type="region of interest" description="Uroporphyrinogen-III C-methyltransferase" evidence="1">
    <location>
        <begin position="216"/>
        <end position="457"/>
    </location>
</feature>
<feature type="active site" description="Proton acceptor" evidence="1">
    <location>
        <position position="248"/>
    </location>
</feature>
<feature type="active site" description="Proton donor" evidence="1">
    <location>
        <position position="270"/>
    </location>
</feature>
<feature type="binding site" evidence="1">
    <location>
        <begin position="22"/>
        <end position="23"/>
    </location>
    <ligand>
        <name>NAD(+)</name>
        <dbReference type="ChEBI" id="CHEBI:57540"/>
    </ligand>
</feature>
<feature type="binding site" evidence="1">
    <location>
        <begin position="43"/>
        <end position="44"/>
    </location>
    <ligand>
        <name>NAD(+)</name>
        <dbReference type="ChEBI" id="CHEBI:57540"/>
    </ligand>
</feature>
<feature type="binding site" evidence="1">
    <location>
        <position position="225"/>
    </location>
    <ligand>
        <name>S-adenosyl-L-methionine</name>
        <dbReference type="ChEBI" id="CHEBI:59789"/>
    </ligand>
</feature>
<feature type="binding site" evidence="1">
    <location>
        <begin position="301"/>
        <end position="303"/>
    </location>
    <ligand>
        <name>S-adenosyl-L-methionine</name>
        <dbReference type="ChEBI" id="CHEBI:59789"/>
    </ligand>
</feature>
<feature type="binding site" evidence="1">
    <location>
        <position position="306"/>
    </location>
    <ligand>
        <name>S-adenosyl-L-methionine</name>
        <dbReference type="ChEBI" id="CHEBI:59789"/>
    </ligand>
</feature>
<feature type="binding site" evidence="1">
    <location>
        <begin position="331"/>
        <end position="332"/>
    </location>
    <ligand>
        <name>S-adenosyl-L-methionine</name>
        <dbReference type="ChEBI" id="CHEBI:59789"/>
    </ligand>
</feature>
<feature type="binding site" evidence="1">
    <location>
        <position position="382"/>
    </location>
    <ligand>
        <name>S-adenosyl-L-methionine</name>
        <dbReference type="ChEBI" id="CHEBI:59789"/>
    </ligand>
</feature>
<feature type="binding site" evidence="1">
    <location>
        <position position="411"/>
    </location>
    <ligand>
        <name>S-adenosyl-L-methionine</name>
        <dbReference type="ChEBI" id="CHEBI:59789"/>
    </ligand>
</feature>
<feature type="modified residue" description="Phosphoserine" evidence="1">
    <location>
        <position position="128"/>
    </location>
</feature>
<gene>
    <name evidence="1" type="primary">cysG</name>
    <name type="ordered locus">STY4319</name>
    <name type="ordered locus">t4028</name>
</gene>